<protein>
    <recommendedName>
        <fullName evidence="1">HTH-type transcriptional regulator YidZ</fullName>
    </recommendedName>
</protein>
<feature type="chain" id="PRO_0000105803" description="HTH-type transcriptional regulator YidZ">
    <location>
        <begin position="1"/>
        <end position="319"/>
    </location>
</feature>
<feature type="domain" description="HTH lysR-type" evidence="1">
    <location>
        <begin position="8"/>
        <end position="65"/>
    </location>
</feature>
<feature type="DNA-binding region" description="H-T-H motif" evidence="1">
    <location>
        <begin position="25"/>
        <end position="44"/>
    </location>
</feature>
<accession>Q8FBU9</accession>
<name>YIDZ_ECOL6</name>
<gene>
    <name evidence="1" type="primary">yidZ</name>
    <name type="ordered locus">c4634</name>
</gene>
<organism>
    <name type="scientific">Escherichia coli O6:H1 (strain CFT073 / ATCC 700928 / UPEC)</name>
    <dbReference type="NCBI Taxonomy" id="199310"/>
    <lineage>
        <taxon>Bacteria</taxon>
        <taxon>Pseudomonadati</taxon>
        <taxon>Pseudomonadota</taxon>
        <taxon>Gammaproteobacteria</taxon>
        <taxon>Enterobacterales</taxon>
        <taxon>Enterobacteriaceae</taxon>
        <taxon>Escherichia</taxon>
    </lineage>
</organism>
<proteinExistence type="inferred from homology"/>
<sequence>MKKSITTLDLNLLLCLQLLMQERSVTKAAKRMNVTPSAVSKSLAKLRAWFDDPLFVNSPLGLSPTPLMVSMEQNLAEWMQMSNLLLDKPHHQTPRGLKFELAAESPLMMIMLNALSKRIYQRYPQATIKLRNWDYDSLDAITRGEVDIGFSGRESHPRSRELLSSLPLAIDYEVLFSDVPCVWLRKDHPALHEAWNLDTFLRYPHISICWEQSDTWALDNVLQELGRERTIAMSLPEFEQSLFMAAQPDNLLLATAPRYCQYYNQLHQLPLVALPLPFDESQQKKLEVPFTLLWHKRNSRNPKIVWLRETIKNLYASMA</sequence>
<dbReference type="EMBL" id="AE014075">
    <property type="protein sequence ID" value="AAN83066.1"/>
    <property type="status" value="ALT_INIT"/>
    <property type="molecule type" value="Genomic_DNA"/>
</dbReference>
<dbReference type="RefSeq" id="WP_000748500.1">
    <property type="nucleotide sequence ID" value="NZ_CP051263.1"/>
</dbReference>
<dbReference type="SMR" id="Q8FBU9"/>
<dbReference type="STRING" id="199310.c4634"/>
<dbReference type="KEGG" id="ecc:c4634"/>
<dbReference type="eggNOG" id="COG0583">
    <property type="taxonomic scope" value="Bacteria"/>
</dbReference>
<dbReference type="HOGENOM" id="CLU_039613_39_2_6"/>
<dbReference type="Proteomes" id="UP000001410">
    <property type="component" value="Chromosome"/>
</dbReference>
<dbReference type="GO" id="GO:0003677">
    <property type="term" value="F:DNA binding"/>
    <property type="evidence" value="ECO:0007669"/>
    <property type="project" value="UniProtKB-KW"/>
</dbReference>
<dbReference type="GO" id="GO:0003700">
    <property type="term" value="F:DNA-binding transcription factor activity"/>
    <property type="evidence" value="ECO:0007669"/>
    <property type="project" value="UniProtKB-UniRule"/>
</dbReference>
<dbReference type="CDD" id="cd08417">
    <property type="entry name" value="PBP2_Nitroaromatics_like"/>
    <property type="match status" value="1"/>
</dbReference>
<dbReference type="FunFam" id="3.40.190.10:FF:000092">
    <property type="entry name" value="HTH-type transcriptional regulator YidZ"/>
    <property type="match status" value="1"/>
</dbReference>
<dbReference type="Gene3D" id="3.40.190.10">
    <property type="entry name" value="Periplasmic binding protein-like II"/>
    <property type="match status" value="2"/>
</dbReference>
<dbReference type="Gene3D" id="1.10.10.10">
    <property type="entry name" value="Winged helix-like DNA-binding domain superfamily/Winged helix DNA-binding domain"/>
    <property type="match status" value="1"/>
</dbReference>
<dbReference type="HAMAP" id="MF_01607">
    <property type="entry name" value="HTH_type_YidZ"/>
    <property type="match status" value="1"/>
</dbReference>
<dbReference type="InterPro" id="IPR050389">
    <property type="entry name" value="LysR-type_TF"/>
</dbReference>
<dbReference type="InterPro" id="IPR005119">
    <property type="entry name" value="LysR_subst-bd"/>
</dbReference>
<dbReference type="InterPro" id="IPR000847">
    <property type="entry name" value="Tscrpt_reg_HTH_LysR"/>
</dbReference>
<dbReference type="InterPro" id="IPR023746">
    <property type="entry name" value="Tscrpt_reg_YidZ"/>
</dbReference>
<dbReference type="InterPro" id="IPR036388">
    <property type="entry name" value="WH-like_DNA-bd_sf"/>
</dbReference>
<dbReference type="InterPro" id="IPR036390">
    <property type="entry name" value="WH_DNA-bd_sf"/>
</dbReference>
<dbReference type="InterPro" id="IPR037402">
    <property type="entry name" value="YidZ_PBP2"/>
</dbReference>
<dbReference type="NCBIfam" id="NF007581">
    <property type="entry name" value="PRK10216.1"/>
    <property type="match status" value="1"/>
</dbReference>
<dbReference type="PANTHER" id="PTHR30118">
    <property type="entry name" value="HTH-TYPE TRANSCRIPTIONAL REGULATOR LEUO-RELATED"/>
    <property type="match status" value="1"/>
</dbReference>
<dbReference type="PANTHER" id="PTHR30118:SF11">
    <property type="entry name" value="HTH-TYPE TRANSCRIPTIONAL REGULATOR YIDZ"/>
    <property type="match status" value="1"/>
</dbReference>
<dbReference type="Pfam" id="PF00126">
    <property type="entry name" value="HTH_1"/>
    <property type="match status" value="1"/>
</dbReference>
<dbReference type="Pfam" id="PF03466">
    <property type="entry name" value="LysR_substrate"/>
    <property type="match status" value="1"/>
</dbReference>
<dbReference type="SUPFAM" id="SSF53850">
    <property type="entry name" value="Periplasmic binding protein-like II"/>
    <property type="match status" value="1"/>
</dbReference>
<dbReference type="SUPFAM" id="SSF46785">
    <property type="entry name" value="Winged helix' DNA-binding domain"/>
    <property type="match status" value="1"/>
</dbReference>
<dbReference type="PROSITE" id="PS50931">
    <property type="entry name" value="HTH_LYSR"/>
    <property type="match status" value="1"/>
</dbReference>
<keyword id="KW-0238">DNA-binding</keyword>
<keyword id="KW-1185">Reference proteome</keyword>
<keyword id="KW-0804">Transcription</keyword>
<keyword id="KW-0805">Transcription regulation</keyword>
<evidence type="ECO:0000255" key="1">
    <source>
        <dbReference type="HAMAP-Rule" id="MF_01607"/>
    </source>
</evidence>
<evidence type="ECO:0000305" key="2"/>
<comment type="function">
    <text evidence="1">Involved in anaerobic NO protection.</text>
</comment>
<comment type="similarity">
    <text evidence="2">Belongs to the LysR transcriptional regulatory family.</text>
</comment>
<comment type="sequence caution" evidence="2">
    <conflict type="erroneous initiation">
        <sequence resource="EMBL-CDS" id="AAN83066"/>
    </conflict>
</comment>
<reference key="1">
    <citation type="journal article" date="2002" name="Proc. Natl. Acad. Sci. U.S.A.">
        <title>Extensive mosaic structure revealed by the complete genome sequence of uropathogenic Escherichia coli.</title>
        <authorList>
            <person name="Welch R.A."/>
            <person name="Burland V."/>
            <person name="Plunkett G. III"/>
            <person name="Redford P."/>
            <person name="Roesch P."/>
            <person name="Rasko D."/>
            <person name="Buckles E.L."/>
            <person name="Liou S.-R."/>
            <person name="Boutin A."/>
            <person name="Hackett J."/>
            <person name="Stroud D."/>
            <person name="Mayhew G.F."/>
            <person name="Rose D.J."/>
            <person name="Zhou S."/>
            <person name="Schwartz D.C."/>
            <person name="Perna N.T."/>
            <person name="Mobley H.L.T."/>
            <person name="Donnenberg M.S."/>
            <person name="Blattner F.R."/>
        </authorList>
    </citation>
    <scope>NUCLEOTIDE SEQUENCE [LARGE SCALE GENOMIC DNA]</scope>
    <source>
        <strain>CFT073 / ATCC 700928 / UPEC</strain>
    </source>
</reference>